<feature type="chain" id="PRO_0000271141" description="Cytochrome c oxidase subunit 1">
    <location>
        <begin position="1"/>
        <end position="528"/>
    </location>
</feature>
<feature type="transmembrane region" description="Helical" evidence="4">
    <location>
        <begin position="15"/>
        <end position="35"/>
    </location>
</feature>
<feature type="transmembrane region" description="Helical" evidence="4">
    <location>
        <begin position="56"/>
        <end position="76"/>
    </location>
</feature>
<feature type="transmembrane region" description="Helical" evidence="4">
    <location>
        <begin position="99"/>
        <end position="119"/>
    </location>
</feature>
<feature type="transmembrane region" description="Helical" evidence="4">
    <location>
        <begin position="145"/>
        <end position="165"/>
    </location>
</feature>
<feature type="transmembrane region" description="Helical" evidence="4">
    <location>
        <begin position="183"/>
        <end position="203"/>
    </location>
</feature>
<feature type="transmembrane region" description="Helical" evidence="4">
    <location>
        <begin position="234"/>
        <end position="254"/>
    </location>
</feature>
<feature type="transmembrane region" description="Helical" evidence="4">
    <location>
        <begin position="266"/>
        <end position="286"/>
    </location>
</feature>
<feature type="transmembrane region" description="Helical" evidence="4">
    <location>
        <begin position="304"/>
        <end position="324"/>
    </location>
</feature>
<feature type="transmembrane region" description="Helical" evidence="4">
    <location>
        <begin position="337"/>
        <end position="357"/>
    </location>
</feature>
<feature type="transmembrane region" description="Helical" evidence="4">
    <location>
        <begin position="372"/>
        <end position="392"/>
    </location>
</feature>
<feature type="transmembrane region" description="Helical" evidence="4">
    <location>
        <begin position="413"/>
        <end position="433"/>
    </location>
</feature>
<feature type="transmembrane region" description="Helical" evidence="4">
    <location>
        <begin position="455"/>
        <end position="475"/>
    </location>
</feature>
<feature type="binding site" evidence="3">
    <location>
        <position position="38"/>
    </location>
    <ligand>
        <name>Ca(2+)</name>
        <dbReference type="ChEBI" id="CHEBI:29108"/>
    </ligand>
</feature>
<feature type="binding site" evidence="3">
    <location>
        <position position="41"/>
    </location>
    <ligand>
        <name>Ca(2+)</name>
        <dbReference type="ChEBI" id="CHEBI:29108"/>
    </ligand>
</feature>
<feature type="binding site" evidence="3">
    <location>
        <position position="43"/>
    </location>
    <ligand>
        <name>Ca(2+)</name>
        <dbReference type="ChEBI" id="CHEBI:29108"/>
    </ligand>
</feature>
<feature type="binding site" description="axial binding residue" evidence="3">
    <location>
        <position position="61"/>
    </location>
    <ligand>
        <name>Fe(II)-heme a</name>
        <dbReference type="ChEBI" id="CHEBI:61715"/>
        <note>low-spin</note>
    </ligand>
    <ligandPart>
        <name>Fe</name>
        <dbReference type="ChEBI" id="CHEBI:18248"/>
    </ligandPart>
</feature>
<feature type="binding site" evidence="3">
    <location>
        <position position="240"/>
    </location>
    <ligand>
        <name>Cu cation</name>
        <dbReference type="ChEBI" id="CHEBI:23378"/>
        <label>B</label>
    </ligand>
</feature>
<feature type="binding site" evidence="2">
    <location>
        <position position="244"/>
    </location>
    <ligand>
        <name>O2</name>
        <dbReference type="ChEBI" id="CHEBI:15379"/>
    </ligand>
</feature>
<feature type="binding site" evidence="3">
    <location>
        <position position="289"/>
    </location>
    <ligand>
        <name>Cu cation</name>
        <dbReference type="ChEBI" id="CHEBI:23378"/>
        <label>B</label>
    </ligand>
</feature>
<feature type="binding site" evidence="3">
    <location>
        <position position="290"/>
    </location>
    <ligand>
        <name>Cu cation</name>
        <dbReference type="ChEBI" id="CHEBI:23378"/>
        <label>B</label>
    </ligand>
</feature>
<feature type="binding site" evidence="3">
    <location>
        <position position="367"/>
    </location>
    <ligand>
        <name>Mg(2+)</name>
        <dbReference type="ChEBI" id="CHEBI:18420"/>
        <note>ligand shared with subunit 2</note>
    </ligand>
</feature>
<feature type="binding site" evidence="3">
    <location>
        <position position="368"/>
    </location>
    <ligand>
        <name>Mg(2+)</name>
        <dbReference type="ChEBI" id="CHEBI:18420"/>
        <note>ligand shared with subunit 2</note>
    </ligand>
</feature>
<feature type="binding site" description="axial binding residue" evidence="3">
    <location>
        <position position="375"/>
    </location>
    <ligand>
        <name>heme a3</name>
        <dbReference type="ChEBI" id="CHEBI:83282"/>
        <note>high-spin</note>
    </ligand>
    <ligandPart>
        <name>Fe</name>
        <dbReference type="ChEBI" id="CHEBI:18248"/>
    </ligandPart>
</feature>
<feature type="binding site" description="axial binding residue" evidence="3">
    <location>
        <position position="377"/>
    </location>
    <ligand>
        <name>Fe(II)-heme a</name>
        <dbReference type="ChEBI" id="CHEBI:61715"/>
        <note>low-spin</note>
    </ligand>
    <ligandPart>
        <name>Fe</name>
        <dbReference type="ChEBI" id="CHEBI:18248"/>
    </ligandPart>
</feature>
<feature type="binding site" evidence="3">
    <location>
        <position position="440"/>
    </location>
    <ligand>
        <name>Ca(2+)</name>
        <dbReference type="ChEBI" id="CHEBI:29108"/>
    </ligand>
</feature>
<feature type="lipid moiety-binding region" description="N6-myristoyl lysine" evidence="1">
    <location>
        <position position="318"/>
    </location>
</feature>
<feature type="cross-link" description="1'-histidyl-3'-tyrosine (His-Tyr)" evidence="3">
    <location>
        <begin position="240"/>
        <end position="244"/>
    </location>
</feature>
<reference key="1">
    <citation type="submission" date="2005-08" db="EMBL/GenBank/DDBJ databases">
        <title>Annotation of mitochondrial genome of Ustilago maydis and comparative analysis of basidiomycete mtDNAs.</title>
        <authorList>
            <person name="Kennell J.C."/>
            <person name="Boehmer C."/>
        </authorList>
    </citation>
    <scope>NUCLEOTIDE SEQUENCE [LARGE SCALE GENOMIC DNA]</scope>
    <source>
        <strain>DSM 14603 / FGSC 9021 / UM521</strain>
    </source>
</reference>
<reference key="2">
    <citation type="journal article" date="2006" name="Nature">
        <title>Insights from the genome of the biotrophic fungal plant pathogen Ustilago maydis.</title>
        <authorList>
            <person name="Kaemper J."/>
            <person name="Kahmann R."/>
            <person name="Boelker M."/>
            <person name="Ma L.-J."/>
            <person name="Brefort T."/>
            <person name="Saville B.J."/>
            <person name="Banuett F."/>
            <person name="Kronstad J.W."/>
            <person name="Gold S.E."/>
            <person name="Mueller O."/>
            <person name="Perlin M.H."/>
            <person name="Woesten H.A.B."/>
            <person name="de Vries R."/>
            <person name="Ruiz-Herrera J."/>
            <person name="Reynaga-Pena C.G."/>
            <person name="Snetselaar K."/>
            <person name="McCann M."/>
            <person name="Perez-Martin J."/>
            <person name="Feldbruegge M."/>
            <person name="Basse C.W."/>
            <person name="Steinberg G."/>
            <person name="Ibeas J.I."/>
            <person name="Holloman W."/>
            <person name="Guzman P."/>
            <person name="Farman M.L."/>
            <person name="Stajich J.E."/>
            <person name="Sentandreu R."/>
            <person name="Gonzalez-Prieto J.M."/>
            <person name="Kennell J.C."/>
            <person name="Molina L."/>
            <person name="Schirawski J."/>
            <person name="Mendoza-Mendoza A."/>
            <person name="Greilinger D."/>
            <person name="Muench K."/>
            <person name="Roessel N."/>
            <person name="Scherer M."/>
            <person name="Vranes M."/>
            <person name="Ladendorf O."/>
            <person name="Vincon V."/>
            <person name="Fuchs U."/>
            <person name="Sandrock B."/>
            <person name="Meng S."/>
            <person name="Ho E.C.H."/>
            <person name="Cahill M.J."/>
            <person name="Boyce K.J."/>
            <person name="Klose J."/>
            <person name="Klosterman S.J."/>
            <person name="Deelstra H.J."/>
            <person name="Ortiz-Castellanos L."/>
            <person name="Li W."/>
            <person name="Sanchez-Alonso P."/>
            <person name="Schreier P.H."/>
            <person name="Haeuser-Hahn I."/>
            <person name="Vaupel M."/>
            <person name="Koopmann E."/>
            <person name="Friedrich G."/>
            <person name="Voss H."/>
            <person name="Schlueter T."/>
            <person name="Margolis J."/>
            <person name="Platt D."/>
            <person name="Swimmer C."/>
            <person name="Gnirke A."/>
            <person name="Chen F."/>
            <person name="Vysotskaia V."/>
            <person name="Mannhaupt G."/>
            <person name="Gueldener U."/>
            <person name="Muensterkoetter M."/>
            <person name="Haase D."/>
            <person name="Oesterheld M."/>
            <person name="Mewes H.-W."/>
            <person name="Mauceli E.W."/>
            <person name="DeCaprio D."/>
            <person name="Wade C.M."/>
            <person name="Butler J."/>
            <person name="Young S.K."/>
            <person name="Jaffe D.B."/>
            <person name="Calvo S.E."/>
            <person name="Nusbaum C."/>
            <person name="Galagan J.E."/>
            <person name="Birren B.W."/>
        </authorList>
    </citation>
    <scope>NUCLEOTIDE SEQUENCE [LARGE SCALE GENOMIC DNA]</scope>
    <source>
        <strain>DSM 14603 / FGSC 9021 / UM521</strain>
    </source>
</reference>
<comment type="function">
    <text evidence="3">Component of the cytochrome c oxidase, the last enzyme in the mitochondrial electron transport chain which drives oxidative phosphorylation. The respiratory chain contains 3 multisubunit complexes succinate dehydrogenase (complex II, CII), ubiquinol-cytochrome c oxidoreductase (cytochrome b-c1 complex, complex III, CIII) and cytochrome c oxidase (complex IV, CIV), that cooperate to transfer electrons derived from NADH and succinate to molecular oxygen, creating an electrochemical gradient over the inner membrane that drives transmembrane transport and the ATP synthase. Cytochrome c oxidase is the component of the respiratory chain that catalyzes the reduction of oxygen to water. Electrons originating from reduced cytochrome c in the intermembrane space (IMS) are transferred via the dinuclear copper A center (CU(A)) of subunit 2 and heme A of subunit 1 to the active site in subunit 1, a binuclear center (BNC) formed by heme A3 and copper B (CU(B)). The BNC reduces molecular oxygen to 2 water molecules using 4 electrons from cytochrome c in the IMS and 4 protons from the mitochondrial matrix.</text>
</comment>
<comment type="catalytic activity">
    <reaction evidence="3">
        <text>4 Fe(II)-[cytochrome c] + O2 + 8 H(+)(in) = 4 Fe(III)-[cytochrome c] + 2 H2O + 4 H(+)(out)</text>
        <dbReference type="Rhea" id="RHEA:11436"/>
        <dbReference type="Rhea" id="RHEA-COMP:10350"/>
        <dbReference type="Rhea" id="RHEA-COMP:14399"/>
        <dbReference type="ChEBI" id="CHEBI:15377"/>
        <dbReference type="ChEBI" id="CHEBI:15378"/>
        <dbReference type="ChEBI" id="CHEBI:15379"/>
        <dbReference type="ChEBI" id="CHEBI:29033"/>
        <dbReference type="ChEBI" id="CHEBI:29034"/>
        <dbReference type="EC" id="7.1.1.9"/>
    </reaction>
    <physiologicalReaction direction="left-to-right" evidence="3">
        <dbReference type="Rhea" id="RHEA:11437"/>
    </physiologicalReaction>
</comment>
<comment type="cofactor">
    <cofactor evidence="3">
        <name>heme</name>
        <dbReference type="ChEBI" id="CHEBI:30413"/>
    </cofactor>
    <text evidence="3">Binds 2 heme A groups non-covalently per subunit.</text>
</comment>
<comment type="cofactor">
    <cofactor evidence="3">
        <name>Cu cation</name>
        <dbReference type="ChEBI" id="CHEBI:23378"/>
    </cofactor>
    <text evidence="3">Binds a copper B center.</text>
</comment>
<comment type="pathway">
    <text evidence="3">Energy metabolism; oxidative phosphorylation.</text>
</comment>
<comment type="subunit">
    <text evidence="3">Component of the cytochrome c oxidase (complex IV, CIV), a multisubunit enzyme composed of a catalytic core of 3 subunits and several supernumerary subunits. The complex exists as a monomer or a dimer and forms supercomplexes (SCs) in the inner mitochondrial membrane with ubiquinol-cytochrome c oxidoreductase (cytochrome b-c1 complex, complex III, CIII).</text>
</comment>
<comment type="subcellular location">
    <subcellularLocation>
        <location evidence="3">Mitochondrion inner membrane</location>
        <topology evidence="3">Multi-pass membrane protein</topology>
    </subcellularLocation>
</comment>
<comment type="similarity">
    <text evidence="5">Belongs to the heme-copper respiratory oxidase family.</text>
</comment>
<keyword id="KW-0106">Calcium</keyword>
<keyword id="KW-0186">Copper</keyword>
<keyword id="KW-0249">Electron transport</keyword>
<keyword id="KW-0349">Heme</keyword>
<keyword id="KW-0408">Iron</keyword>
<keyword id="KW-0449">Lipoprotein</keyword>
<keyword id="KW-0460">Magnesium</keyword>
<keyword id="KW-0472">Membrane</keyword>
<keyword id="KW-0479">Metal-binding</keyword>
<keyword id="KW-0496">Mitochondrion</keyword>
<keyword id="KW-0999">Mitochondrion inner membrane</keyword>
<keyword id="KW-0519">Myristate</keyword>
<keyword id="KW-1185">Reference proteome</keyword>
<keyword id="KW-0679">Respiratory chain</keyword>
<keyword id="KW-1278">Translocase</keyword>
<keyword id="KW-0812">Transmembrane</keyword>
<keyword id="KW-1133">Transmembrane helix</keyword>
<keyword id="KW-0813">Transport</keyword>
<accession>Q0H8Y4</accession>
<organism>
    <name type="scientific">Mycosarcoma maydis</name>
    <name type="common">Corn smut fungus</name>
    <name type="synonym">Ustilago maydis</name>
    <dbReference type="NCBI Taxonomy" id="5270"/>
    <lineage>
        <taxon>Eukaryota</taxon>
        <taxon>Fungi</taxon>
        <taxon>Dikarya</taxon>
        <taxon>Basidiomycota</taxon>
        <taxon>Ustilaginomycotina</taxon>
        <taxon>Ustilaginomycetes</taxon>
        <taxon>Ustilaginales</taxon>
        <taxon>Ustilaginaceae</taxon>
        <taxon>Mycosarcoma</taxon>
    </lineage>
</organism>
<geneLocation type="mitochondrion"/>
<gene>
    <name type="primary">COX1</name>
</gene>
<sequence>MVRWLYSTNAKDIGTLYLIFAVFAAMIGTAFSVLIRMELAAPGVQYLNGDHQLYNVIITAHAFVMIFFMVMPAMVGGFGNYLVPVMIGAPDMAFPRLNNISFWLLPPSLILLLASAFVEQGAGTGWTVYPPLSGLQSHSGGSVDLAIFSLHLSGISSMLGAMNFITTVLNMRNPGMTLHKLPLFVWAIFVTAILLLLSLPVLAGAITMLLTDRNFNTSFYDPAGGGDPILYQHLFWFFGHPEVYILIIPGFGMVSHIVSAFSGKPVFGYLGMVYAMFSIGILGFLVWSHHMYAVGLDVDTRAYFTAATMIIAVPTGIKIFSWLATLYGGSLRITTPMLFALGFIALFTIGGLTGVILANASLDVALHDTYYVVAHFHYVLSMGAVFALFGGFYFWTPKIIGKTFNENLGRIHFWTLFVGVNLTFFPQHFLGLGGMPRRIPDYPDAFAAWNAISSFGSLVSVVATALFGYIIYDILVNGKPVDANPWAVPAFFQSTPEFWMESHTASSLEWALESPTPFHSFNMLPVQS</sequence>
<protein>
    <recommendedName>
        <fullName>Cytochrome c oxidase subunit 1</fullName>
        <ecNumber>7.1.1.9</ecNumber>
    </recommendedName>
    <alternativeName>
        <fullName>Cytochrome c oxidase polypeptide I</fullName>
    </alternativeName>
</protein>
<evidence type="ECO:0000250" key="1"/>
<evidence type="ECO:0000250" key="2">
    <source>
        <dbReference type="UniProtKB" id="P00396"/>
    </source>
</evidence>
<evidence type="ECO:0000250" key="3">
    <source>
        <dbReference type="UniProtKB" id="P00401"/>
    </source>
</evidence>
<evidence type="ECO:0000255" key="4"/>
<evidence type="ECO:0000305" key="5"/>
<name>COX1_MYCMD</name>
<dbReference type="EC" id="7.1.1.9"/>
<dbReference type="EMBL" id="DQ157700">
    <property type="protein sequence ID" value="AAZ67011.1"/>
    <property type="molecule type" value="Genomic_DNA"/>
</dbReference>
<dbReference type="EMBL" id="AACP01000277">
    <property type="status" value="NOT_ANNOTATED_CDS"/>
    <property type="molecule type" value="Genomic_DNA"/>
</dbReference>
<dbReference type="EMBL" id="AACP01000278">
    <property type="status" value="NOT_ANNOTATED_CDS"/>
    <property type="molecule type" value="Genomic_DNA"/>
</dbReference>
<dbReference type="RefSeq" id="YP_762688.1">
    <property type="nucleotide sequence ID" value="NC_008368.1"/>
</dbReference>
<dbReference type="SMR" id="Q0H8Y4"/>
<dbReference type="FunCoup" id="Q0H8Y4">
    <property type="interactions" value="65"/>
</dbReference>
<dbReference type="STRING" id="237631.Q0H8Y4"/>
<dbReference type="GeneID" id="4308276"/>
<dbReference type="InParanoid" id="Q0H8Y4"/>
<dbReference type="UniPathway" id="UPA00705"/>
<dbReference type="Proteomes" id="UP000000561">
    <property type="component" value="Mitochondrion"/>
</dbReference>
<dbReference type="GO" id="GO:0005743">
    <property type="term" value="C:mitochondrial inner membrane"/>
    <property type="evidence" value="ECO:0007669"/>
    <property type="project" value="UniProtKB-SubCell"/>
</dbReference>
<dbReference type="GO" id="GO:0045277">
    <property type="term" value="C:respiratory chain complex IV"/>
    <property type="evidence" value="ECO:0000318"/>
    <property type="project" value="GO_Central"/>
</dbReference>
<dbReference type="GO" id="GO:0004129">
    <property type="term" value="F:cytochrome-c oxidase activity"/>
    <property type="evidence" value="ECO:0007669"/>
    <property type="project" value="UniProtKB-EC"/>
</dbReference>
<dbReference type="GO" id="GO:0020037">
    <property type="term" value="F:heme binding"/>
    <property type="evidence" value="ECO:0007669"/>
    <property type="project" value="InterPro"/>
</dbReference>
<dbReference type="GO" id="GO:0046872">
    <property type="term" value="F:metal ion binding"/>
    <property type="evidence" value="ECO:0007669"/>
    <property type="project" value="UniProtKB-KW"/>
</dbReference>
<dbReference type="GO" id="GO:0009060">
    <property type="term" value="P:aerobic respiration"/>
    <property type="evidence" value="ECO:0000318"/>
    <property type="project" value="GO_Central"/>
</dbReference>
<dbReference type="GO" id="GO:0015990">
    <property type="term" value="P:electron transport coupled proton transport"/>
    <property type="evidence" value="ECO:0007669"/>
    <property type="project" value="InterPro"/>
</dbReference>
<dbReference type="GO" id="GO:0006119">
    <property type="term" value="P:oxidative phosphorylation"/>
    <property type="evidence" value="ECO:0007669"/>
    <property type="project" value="UniProtKB-UniPathway"/>
</dbReference>
<dbReference type="GO" id="GO:0022904">
    <property type="term" value="P:respiratory electron transport chain"/>
    <property type="evidence" value="ECO:0000318"/>
    <property type="project" value="GO_Central"/>
</dbReference>
<dbReference type="CDD" id="cd01663">
    <property type="entry name" value="Cyt_c_Oxidase_I"/>
    <property type="match status" value="1"/>
</dbReference>
<dbReference type="FunFam" id="1.20.210.10:FF:000001">
    <property type="entry name" value="Cytochrome c oxidase subunit 1"/>
    <property type="match status" value="1"/>
</dbReference>
<dbReference type="Gene3D" id="1.20.210.10">
    <property type="entry name" value="Cytochrome c oxidase-like, subunit I domain"/>
    <property type="match status" value="1"/>
</dbReference>
<dbReference type="InterPro" id="IPR023616">
    <property type="entry name" value="Cyt_c_oxase-like_su1_dom"/>
</dbReference>
<dbReference type="InterPro" id="IPR036927">
    <property type="entry name" value="Cyt_c_oxase-like_su1_sf"/>
</dbReference>
<dbReference type="InterPro" id="IPR000883">
    <property type="entry name" value="Cyt_C_Oxase_1"/>
</dbReference>
<dbReference type="InterPro" id="IPR023615">
    <property type="entry name" value="Cyt_c_Oxase_su1_BS"/>
</dbReference>
<dbReference type="InterPro" id="IPR033944">
    <property type="entry name" value="Cyt_c_oxase_su1_dom"/>
</dbReference>
<dbReference type="InterPro" id="IPR014241">
    <property type="entry name" value="Cyt_c_oxidase_su1_bac"/>
</dbReference>
<dbReference type="NCBIfam" id="TIGR02891">
    <property type="entry name" value="CtaD_CoxA"/>
    <property type="match status" value="1"/>
</dbReference>
<dbReference type="PANTHER" id="PTHR10422">
    <property type="entry name" value="CYTOCHROME C OXIDASE SUBUNIT 1"/>
    <property type="match status" value="1"/>
</dbReference>
<dbReference type="PANTHER" id="PTHR10422:SF18">
    <property type="entry name" value="CYTOCHROME C OXIDASE SUBUNIT 1"/>
    <property type="match status" value="1"/>
</dbReference>
<dbReference type="Pfam" id="PF00115">
    <property type="entry name" value="COX1"/>
    <property type="match status" value="1"/>
</dbReference>
<dbReference type="PRINTS" id="PR01165">
    <property type="entry name" value="CYCOXIDASEI"/>
</dbReference>
<dbReference type="SUPFAM" id="SSF81442">
    <property type="entry name" value="Cytochrome c oxidase subunit I-like"/>
    <property type="match status" value="1"/>
</dbReference>
<dbReference type="PROSITE" id="PS50855">
    <property type="entry name" value="COX1"/>
    <property type="match status" value="1"/>
</dbReference>
<dbReference type="PROSITE" id="PS00077">
    <property type="entry name" value="COX1_CUB"/>
    <property type="match status" value="1"/>
</dbReference>
<proteinExistence type="inferred from homology"/>